<gene>
    <name evidence="1" type="primary">pdxJ</name>
    <name type="ordered locus">LBF_0458</name>
</gene>
<dbReference type="EC" id="2.6.99.2" evidence="1"/>
<dbReference type="EMBL" id="CP000777">
    <property type="protein sequence ID" value="ABZ92997.1"/>
    <property type="molecule type" value="Genomic_DNA"/>
</dbReference>
<dbReference type="RefSeq" id="WP_012387501.1">
    <property type="nucleotide sequence ID" value="NC_010842.1"/>
</dbReference>
<dbReference type="SMR" id="B0SBH6"/>
<dbReference type="KEGG" id="lbf:LBF_0458"/>
<dbReference type="HOGENOM" id="CLU_074563_1_0_12"/>
<dbReference type="UniPathway" id="UPA00244">
    <property type="reaction ID" value="UER00313"/>
</dbReference>
<dbReference type="GO" id="GO:0005829">
    <property type="term" value="C:cytosol"/>
    <property type="evidence" value="ECO:0007669"/>
    <property type="project" value="TreeGrafter"/>
</dbReference>
<dbReference type="GO" id="GO:0033856">
    <property type="term" value="F:pyridoxine 5'-phosphate synthase activity"/>
    <property type="evidence" value="ECO:0007669"/>
    <property type="project" value="UniProtKB-EC"/>
</dbReference>
<dbReference type="GO" id="GO:0008615">
    <property type="term" value="P:pyridoxine biosynthetic process"/>
    <property type="evidence" value="ECO:0007669"/>
    <property type="project" value="UniProtKB-UniRule"/>
</dbReference>
<dbReference type="Gene3D" id="3.20.20.70">
    <property type="entry name" value="Aldolase class I"/>
    <property type="match status" value="1"/>
</dbReference>
<dbReference type="HAMAP" id="MF_00279">
    <property type="entry name" value="PdxJ"/>
    <property type="match status" value="1"/>
</dbReference>
<dbReference type="InterPro" id="IPR013785">
    <property type="entry name" value="Aldolase_TIM"/>
</dbReference>
<dbReference type="InterPro" id="IPR004569">
    <property type="entry name" value="PyrdxlP_synth_PdxJ"/>
</dbReference>
<dbReference type="InterPro" id="IPR036130">
    <property type="entry name" value="Pyridoxine-5'_phos_synth"/>
</dbReference>
<dbReference type="NCBIfam" id="TIGR00559">
    <property type="entry name" value="pdxJ"/>
    <property type="match status" value="1"/>
</dbReference>
<dbReference type="NCBIfam" id="NF003626">
    <property type="entry name" value="PRK05265.1-4"/>
    <property type="match status" value="1"/>
</dbReference>
<dbReference type="PANTHER" id="PTHR30456">
    <property type="entry name" value="PYRIDOXINE 5'-PHOSPHATE SYNTHASE"/>
    <property type="match status" value="1"/>
</dbReference>
<dbReference type="PANTHER" id="PTHR30456:SF0">
    <property type="entry name" value="PYRIDOXINE 5'-PHOSPHATE SYNTHASE"/>
    <property type="match status" value="1"/>
</dbReference>
<dbReference type="Pfam" id="PF03740">
    <property type="entry name" value="PdxJ"/>
    <property type="match status" value="1"/>
</dbReference>
<dbReference type="SUPFAM" id="SSF63892">
    <property type="entry name" value="Pyridoxine 5'-phosphate synthase"/>
    <property type="match status" value="1"/>
</dbReference>
<protein>
    <recommendedName>
        <fullName evidence="1">Pyridoxine 5'-phosphate synthase</fullName>
        <shortName evidence="1">PNP synthase</shortName>
        <ecNumber evidence="1">2.6.99.2</ecNumber>
    </recommendedName>
</protein>
<reference key="1">
    <citation type="journal article" date="2008" name="PLoS ONE">
        <title>Genome sequence of the saprophyte Leptospira biflexa provides insights into the evolution of Leptospira and the pathogenesis of leptospirosis.</title>
        <authorList>
            <person name="Picardeau M."/>
            <person name="Bulach D.M."/>
            <person name="Bouchier C."/>
            <person name="Zuerner R.L."/>
            <person name="Zidane N."/>
            <person name="Wilson P.J."/>
            <person name="Creno S."/>
            <person name="Kuczek E.S."/>
            <person name="Bommezzadri S."/>
            <person name="Davis J.C."/>
            <person name="McGrath A."/>
            <person name="Johnson M.J."/>
            <person name="Boursaux-Eude C."/>
            <person name="Seemann T."/>
            <person name="Rouy Z."/>
            <person name="Coppel R.L."/>
            <person name="Rood J.I."/>
            <person name="Lajus A."/>
            <person name="Davies J.K."/>
            <person name="Medigue C."/>
            <person name="Adler B."/>
        </authorList>
    </citation>
    <scope>NUCLEOTIDE SEQUENCE [LARGE SCALE GENOMIC DNA]</scope>
    <source>
        <strain>Patoc 1 / Ames</strain>
    </source>
</reference>
<sequence>MTQLSVNVNKIATLRNSRGGSLPSVLKLSELILDSGAHGITVHPRSDERHITKQDVFELQEFLRTYNEKITKLGISKKEYNIEGEPSERFLDLVLKAKPDQATLVPVKPGEITSDHGFQFADQKTFSTLKPIVEAIRKEGIRVSLFMETDFTFYDQVVALGAERIELYTGPFAHAFDLSEEKGKEIFTDYQRAAIEANKLGLAVNAGHDLDTNNLRVFAKLPYLKEVSIGHRLMAQSLVDGLETTVKSYLKVLSLGNETE</sequence>
<proteinExistence type="inferred from homology"/>
<accession>B0SBH6</accession>
<evidence type="ECO:0000255" key="1">
    <source>
        <dbReference type="HAMAP-Rule" id="MF_00279"/>
    </source>
</evidence>
<organism>
    <name type="scientific">Leptospira biflexa serovar Patoc (strain Patoc 1 / Ames)</name>
    <dbReference type="NCBI Taxonomy" id="355278"/>
    <lineage>
        <taxon>Bacteria</taxon>
        <taxon>Pseudomonadati</taxon>
        <taxon>Spirochaetota</taxon>
        <taxon>Spirochaetia</taxon>
        <taxon>Leptospirales</taxon>
        <taxon>Leptospiraceae</taxon>
        <taxon>Leptospira</taxon>
    </lineage>
</organism>
<feature type="chain" id="PRO_1000114814" description="Pyridoxine 5'-phosphate synthase">
    <location>
        <begin position="1"/>
        <end position="260"/>
    </location>
</feature>
<feature type="active site" description="Proton acceptor" evidence="1">
    <location>
        <position position="43"/>
    </location>
</feature>
<feature type="active site" description="Proton acceptor" evidence="1">
    <location>
        <position position="83"/>
    </location>
</feature>
<feature type="active site" description="Proton donor" evidence="1">
    <location>
        <position position="208"/>
    </location>
</feature>
<feature type="binding site" evidence="1">
    <location>
        <position position="7"/>
    </location>
    <ligand>
        <name>3-amino-2-oxopropyl phosphate</name>
        <dbReference type="ChEBI" id="CHEBI:57279"/>
    </ligand>
</feature>
<feature type="binding site" evidence="1">
    <location>
        <position position="18"/>
    </location>
    <ligand>
        <name>3-amino-2-oxopropyl phosphate</name>
        <dbReference type="ChEBI" id="CHEBI:57279"/>
    </ligand>
</feature>
<feature type="binding site" evidence="1">
    <location>
        <position position="45"/>
    </location>
    <ligand>
        <name>1-deoxy-D-xylulose 5-phosphate</name>
        <dbReference type="ChEBI" id="CHEBI:57792"/>
    </ligand>
</feature>
<feature type="binding site" evidence="1">
    <location>
        <position position="50"/>
    </location>
    <ligand>
        <name>1-deoxy-D-xylulose 5-phosphate</name>
        <dbReference type="ChEBI" id="CHEBI:57792"/>
    </ligand>
</feature>
<feature type="binding site" evidence="1">
    <location>
        <position position="113"/>
    </location>
    <ligand>
        <name>1-deoxy-D-xylulose 5-phosphate</name>
        <dbReference type="ChEBI" id="CHEBI:57792"/>
    </ligand>
</feature>
<feature type="binding site" evidence="1">
    <location>
        <position position="209"/>
    </location>
    <ligand>
        <name>3-amino-2-oxopropyl phosphate</name>
        <dbReference type="ChEBI" id="CHEBI:57279"/>
    </ligand>
</feature>
<feature type="binding site" evidence="1">
    <location>
        <begin position="230"/>
        <end position="231"/>
    </location>
    <ligand>
        <name>3-amino-2-oxopropyl phosphate</name>
        <dbReference type="ChEBI" id="CHEBI:57279"/>
    </ligand>
</feature>
<feature type="site" description="Transition state stabilizer" evidence="1">
    <location>
        <position position="166"/>
    </location>
</feature>
<comment type="function">
    <text evidence="1">Catalyzes the complicated ring closure reaction between the two acyclic compounds 1-deoxy-D-xylulose-5-phosphate (DXP) and 3-amino-2-oxopropyl phosphate (1-amino-acetone-3-phosphate or AAP) to form pyridoxine 5'-phosphate (PNP) and inorganic phosphate.</text>
</comment>
<comment type="catalytic activity">
    <reaction evidence="1">
        <text>3-amino-2-oxopropyl phosphate + 1-deoxy-D-xylulose 5-phosphate = pyridoxine 5'-phosphate + phosphate + 2 H2O + H(+)</text>
        <dbReference type="Rhea" id="RHEA:15265"/>
        <dbReference type="ChEBI" id="CHEBI:15377"/>
        <dbReference type="ChEBI" id="CHEBI:15378"/>
        <dbReference type="ChEBI" id="CHEBI:43474"/>
        <dbReference type="ChEBI" id="CHEBI:57279"/>
        <dbReference type="ChEBI" id="CHEBI:57792"/>
        <dbReference type="ChEBI" id="CHEBI:58589"/>
        <dbReference type="EC" id="2.6.99.2"/>
    </reaction>
</comment>
<comment type="pathway">
    <text evidence="1">Cofactor biosynthesis; pyridoxine 5'-phosphate biosynthesis; pyridoxine 5'-phosphate from D-erythrose 4-phosphate: step 5/5.</text>
</comment>
<comment type="subunit">
    <text evidence="1">Homooctamer; tetramer of dimers.</text>
</comment>
<comment type="subcellular location">
    <subcellularLocation>
        <location evidence="1">Cytoplasm</location>
    </subcellularLocation>
</comment>
<comment type="similarity">
    <text evidence="1">Belongs to the PNP synthase family.</text>
</comment>
<keyword id="KW-0963">Cytoplasm</keyword>
<keyword id="KW-0664">Pyridoxine biosynthesis</keyword>
<keyword id="KW-0808">Transferase</keyword>
<name>PDXJ_LEPBA</name>